<dbReference type="EMBL" id="CR936257">
    <property type="protein sequence ID" value="CAI48200.1"/>
    <property type="molecule type" value="Genomic_DNA"/>
</dbReference>
<dbReference type="RefSeq" id="WP_011321839.1">
    <property type="nucleotide sequence ID" value="NC_007426.1"/>
</dbReference>
<dbReference type="SMR" id="Q3IUI0"/>
<dbReference type="STRING" id="348780.NP_0218A"/>
<dbReference type="EnsemblBacteria" id="CAI48200">
    <property type="protein sequence ID" value="CAI48200"/>
    <property type="gene ID" value="NP_0218A"/>
</dbReference>
<dbReference type="GeneID" id="3702669"/>
<dbReference type="KEGG" id="nph:NP_0218A"/>
<dbReference type="eggNOG" id="arCOG03060">
    <property type="taxonomic scope" value="Archaea"/>
</dbReference>
<dbReference type="HOGENOM" id="CLU_005965_2_4_2"/>
<dbReference type="OrthoDB" id="9944at2157"/>
<dbReference type="Proteomes" id="UP000002698">
    <property type="component" value="Chromosome"/>
</dbReference>
<dbReference type="GO" id="GO:0005524">
    <property type="term" value="F:ATP binding"/>
    <property type="evidence" value="ECO:0007669"/>
    <property type="project" value="UniProtKB-UniRule"/>
</dbReference>
<dbReference type="GO" id="GO:0140662">
    <property type="term" value="F:ATP-dependent protein folding chaperone"/>
    <property type="evidence" value="ECO:0007669"/>
    <property type="project" value="InterPro"/>
</dbReference>
<dbReference type="GO" id="GO:0051082">
    <property type="term" value="F:unfolded protein binding"/>
    <property type="evidence" value="ECO:0007669"/>
    <property type="project" value="InterPro"/>
</dbReference>
<dbReference type="CDD" id="cd10234">
    <property type="entry name" value="ASKHA_NBD_HSP70_DnaK-like"/>
    <property type="match status" value="1"/>
</dbReference>
<dbReference type="FunFam" id="2.60.34.10:FF:000014">
    <property type="entry name" value="Chaperone protein DnaK HSP70"/>
    <property type="match status" value="1"/>
</dbReference>
<dbReference type="FunFam" id="3.30.420.40:FF:000071">
    <property type="entry name" value="Molecular chaperone DnaK"/>
    <property type="match status" value="1"/>
</dbReference>
<dbReference type="FunFam" id="3.90.640.10:FF:000003">
    <property type="entry name" value="Molecular chaperone DnaK"/>
    <property type="match status" value="1"/>
</dbReference>
<dbReference type="Gene3D" id="1.20.1270.10">
    <property type="match status" value="1"/>
</dbReference>
<dbReference type="Gene3D" id="3.30.420.40">
    <property type="match status" value="2"/>
</dbReference>
<dbReference type="Gene3D" id="3.90.640.10">
    <property type="entry name" value="Actin, Chain A, domain 4"/>
    <property type="match status" value="1"/>
</dbReference>
<dbReference type="Gene3D" id="2.60.34.10">
    <property type="entry name" value="Substrate Binding Domain Of DNAk, Chain A, domain 1"/>
    <property type="match status" value="1"/>
</dbReference>
<dbReference type="HAMAP" id="MF_00332">
    <property type="entry name" value="DnaK"/>
    <property type="match status" value="1"/>
</dbReference>
<dbReference type="InterPro" id="IPR043129">
    <property type="entry name" value="ATPase_NBD"/>
</dbReference>
<dbReference type="InterPro" id="IPR012725">
    <property type="entry name" value="Chaperone_DnaK"/>
</dbReference>
<dbReference type="InterPro" id="IPR018181">
    <property type="entry name" value="Heat_shock_70_CS"/>
</dbReference>
<dbReference type="InterPro" id="IPR029048">
    <property type="entry name" value="HSP70_C_sf"/>
</dbReference>
<dbReference type="InterPro" id="IPR029047">
    <property type="entry name" value="HSP70_peptide-bd_sf"/>
</dbReference>
<dbReference type="InterPro" id="IPR013126">
    <property type="entry name" value="Hsp_70_fam"/>
</dbReference>
<dbReference type="NCBIfam" id="NF001413">
    <property type="entry name" value="PRK00290.1"/>
    <property type="match status" value="1"/>
</dbReference>
<dbReference type="NCBIfam" id="TIGR02350">
    <property type="entry name" value="prok_dnaK"/>
    <property type="match status" value="1"/>
</dbReference>
<dbReference type="PANTHER" id="PTHR19375">
    <property type="entry name" value="HEAT SHOCK PROTEIN 70KDA"/>
    <property type="match status" value="1"/>
</dbReference>
<dbReference type="Pfam" id="PF00012">
    <property type="entry name" value="HSP70"/>
    <property type="match status" value="1"/>
</dbReference>
<dbReference type="PRINTS" id="PR00301">
    <property type="entry name" value="HEATSHOCK70"/>
</dbReference>
<dbReference type="SUPFAM" id="SSF53067">
    <property type="entry name" value="Actin-like ATPase domain"/>
    <property type="match status" value="2"/>
</dbReference>
<dbReference type="SUPFAM" id="SSF100934">
    <property type="entry name" value="Heat shock protein 70kD (HSP70), C-terminal subdomain"/>
    <property type="match status" value="1"/>
</dbReference>
<dbReference type="SUPFAM" id="SSF100920">
    <property type="entry name" value="Heat shock protein 70kD (HSP70), peptide-binding domain"/>
    <property type="match status" value="1"/>
</dbReference>
<dbReference type="PROSITE" id="PS00297">
    <property type="entry name" value="HSP70_1"/>
    <property type="match status" value="1"/>
</dbReference>
<dbReference type="PROSITE" id="PS00329">
    <property type="entry name" value="HSP70_2"/>
    <property type="match status" value="1"/>
</dbReference>
<dbReference type="PROSITE" id="PS01036">
    <property type="entry name" value="HSP70_3"/>
    <property type="match status" value="1"/>
</dbReference>
<evidence type="ECO:0000255" key="1">
    <source>
        <dbReference type="HAMAP-Rule" id="MF_00332"/>
    </source>
</evidence>
<evidence type="ECO:0000256" key="2">
    <source>
        <dbReference type="SAM" id="MobiDB-lite"/>
    </source>
</evidence>
<name>DNAK_NATPD</name>
<gene>
    <name evidence="1" type="primary">dnaK</name>
    <name type="ordered locus">NP_0218A</name>
</gene>
<protein>
    <recommendedName>
        <fullName evidence="1">Chaperone protein DnaK</fullName>
    </recommendedName>
    <alternativeName>
        <fullName evidence="1">HSP70</fullName>
    </alternativeName>
    <alternativeName>
        <fullName evidence="1">Heat shock 70 kDa protein</fullName>
    </alternativeName>
    <alternativeName>
        <fullName evidence="1">Heat shock protein 70</fullName>
    </alternativeName>
</protein>
<reference key="1">
    <citation type="journal article" date="2005" name="Genome Res.">
        <title>Living with two extremes: conclusions from the genome sequence of Natronomonas pharaonis.</title>
        <authorList>
            <person name="Falb M."/>
            <person name="Pfeiffer F."/>
            <person name="Palm P."/>
            <person name="Rodewald K."/>
            <person name="Hickmann V."/>
            <person name="Tittor J."/>
            <person name="Oesterhelt D."/>
        </authorList>
    </citation>
    <scope>NUCLEOTIDE SEQUENCE [LARGE SCALE GENOMIC DNA]</scope>
    <source>
        <strain>ATCC 35678 / DSM 2160 / CIP 103997 / JCM 8858 / NBRC 14720 / NCIMB 2260 / Gabara</strain>
    </source>
</reference>
<feature type="chain" id="PRO_0000226036" description="Chaperone protein DnaK">
    <location>
        <begin position="1"/>
        <end position="656"/>
    </location>
</feature>
<feature type="region of interest" description="Disordered" evidence="2">
    <location>
        <begin position="488"/>
        <end position="532"/>
    </location>
</feature>
<feature type="region of interest" description="Disordered" evidence="2">
    <location>
        <begin position="579"/>
        <end position="656"/>
    </location>
</feature>
<feature type="compositionally biased region" description="Basic and acidic residues" evidence="2">
    <location>
        <begin position="492"/>
        <end position="513"/>
    </location>
</feature>
<feature type="compositionally biased region" description="Acidic residues" evidence="2">
    <location>
        <begin position="523"/>
        <end position="532"/>
    </location>
</feature>
<feature type="compositionally biased region" description="Gly residues" evidence="2">
    <location>
        <begin position="584"/>
        <end position="635"/>
    </location>
</feature>
<feature type="compositionally biased region" description="Acidic residues" evidence="2">
    <location>
        <begin position="636"/>
        <end position="656"/>
    </location>
</feature>
<comment type="function">
    <text evidence="1">Acts as a chaperone.</text>
</comment>
<comment type="similarity">
    <text evidence="1">Belongs to the heat shock protein 70 family.</text>
</comment>
<sequence>MASNKILGIDLGTTNSAFAVMEGGDPEIIVNSEGERTTPSVVAFTDDGERLVGKPAKNQAVQNPEDTIQSIKRHMGEDDYTVEVGDDEYTPEQISAMILQKIKRDAEEYLGDDIEKAVITVPAYFNDRQRQATKDAGEIAGFEVERIVNEPTAAAMAYGLDDESDQTVLVYDLGGGTFDVSILDLGGGVYEVVATNGDNDLGGDDWDEAIIDYLADSFEEEHGIDLREDRQALQRLHEAAEEAKIELSSRKETNINLPFIAATDEGPLNLEESISRAKFESLTSDLVERTVGPTEQALDDAGYSKGDIDEVILVGGSTRMPMVQEKVEELTGQEPKKNVNPDEAVGLGAAIQGGVLSGDVDDIVLLDVTPLSLGIEVKGGLFERLIDKNTTIPTEASKVFTTAADNQTSVNIRVFQGEREIAEENELLGAFQLTGIPPAPAGTPQIEVTFNIDENGIVNVEAEDQGSGNKEDITIEGGVGLSDEEIEEMQEEAEKHAEEDEKRRERIEARNEAESTLQRAETLLDENEDAVDDDLRADIEASMDDLREVVEDEDADTDELTEATEALAEALQEIGKQMYQQQAGEGGAGAGAGAAGGMGGAGPGGMGGAGPGGMGGAGPGGMGGAGPGAGAGQQGDGEEFVDADFEDVDDEDDEDE</sequence>
<organism>
    <name type="scientific">Natronomonas pharaonis (strain ATCC 35678 / DSM 2160 / CIP 103997 / JCM 8858 / NBRC 14720 / NCIMB 2260 / Gabara)</name>
    <name type="common">Halobacterium pharaonis</name>
    <dbReference type="NCBI Taxonomy" id="348780"/>
    <lineage>
        <taxon>Archaea</taxon>
        <taxon>Methanobacteriati</taxon>
        <taxon>Methanobacteriota</taxon>
        <taxon>Stenosarchaea group</taxon>
        <taxon>Halobacteria</taxon>
        <taxon>Halobacteriales</taxon>
        <taxon>Haloarculaceae</taxon>
        <taxon>Natronomonas</taxon>
    </lineage>
</organism>
<proteinExistence type="inferred from homology"/>
<keyword id="KW-0067">ATP-binding</keyword>
<keyword id="KW-0143">Chaperone</keyword>
<keyword id="KW-0547">Nucleotide-binding</keyword>
<keyword id="KW-1185">Reference proteome</keyword>
<accession>Q3IUI0</accession>